<name>FLC2_YEAST</name>
<reference key="1">
    <citation type="journal article" date="1995" name="Proc. Natl. Acad. Sci. U.S.A.">
        <title>The nucleotide sequence of chromosome I from Saccharomyces cerevisiae.</title>
        <authorList>
            <person name="Bussey H."/>
            <person name="Kaback D.B."/>
            <person name="Zhong W.-W."/>
            <person name="Vo D.H."/>
            <person name="Clark M.W."/>
            <person name="Fortin N."/>
            <person name="Hall J."/>
            <person name="Ouellette B.F.F."/>
            <person name="Keng T."/>
            <person name="Barton A.B."/>
            <person name="Su Y."/>
            <person name="Davies C.J."/>
            <person name="Storms R.K."/>
        </authorList>
    </citation>
    <scope>NUCLEOTIDE SEQUENCE [LARGE SCALE GENOMIC DNA]</scope>
    <source>
        <strain>ATCC 204508 / S288c</strain>
    </source>
</reference>
<reference key="2">
    <citation type="journal article" date="2014" name="G3 (Bethesda)">
        <title>The reference genome sequence of Saccharomyces cerevisiae: Then and now.</title>
        <authorList>
            <person name="Engel S.R."/>
            <person name="Dietrich F.S."/>
            <person name="Fisk D.G."/>
            <person name="Binkley G."/>
            <person name="Balakrishnan R."/>
            <person name="Costanzo M.C."/>
            <person name="Dwight S.S."/>
            <person name="Hitz B.C."/>
            <person name="Karra K."/>
            <person name="Nash R.S."/>
            <person name="Weng S."/>
            <person name="Wong E.D."/>
            <person name="Lloyd P."/>
            <person name="Skrzypek M.S."/>
            <person name="Miyasato S.R."/>
            <person name="Simison M."/>
            <person name="Cherry J.M."/>
        </authorList>
    </citation>
    <scope>GENOME REANNOTATION</scope>
    <scope>SEQUENCE REVISION TO 111; 312 AND 641-643</scope>
    <source>
        <strain>ATCC 204508 / S288c</strain>
    </source>
</reference>
<reference key="3">
    <citation type="journal article" date="1995" name="Gene">
        <title>Carbon source-dependent regulation of the acetyl-coenzyme A synthetase-encoding gene ACS1 from Saccharomyces cerevisiae.</title>
        <authorList>
            <person name="Kratzer S."/>
            <person name="Schueller H.-J."/>
        </authorList>
    </citation>
    <scope>NUCLEOTIDE SEQUENCE [GENOMIC DNA] OF 1-160</scope>
    <source>
        <strain>GRF78</strain>
    </source>
</reference>
<reference key="4">
    <citation type="journal article" date="2003" name="Nature">
        <title>Global analysis of protein expression in yeast.</title>
        <authorList>
            <person name="Ghaemmaghami S."/>
            <person name="Huh W.-K."/>
            <person name="Bower K."/>
            <person name="Howson R.W."/>
            <person name="Belle A."/>
            <person name="Dephoure N."/>
            <person name="O'Shea E.K."/>
            <person name="Weissman J.S."/>
        </authorList>
    </citation>
    <scope>LEVEL OF PROTEIN EXPRESSION [LARGE SCALE ANALYSIS]</scope>
</reference>
<reference key="5">
    <citation type="journal article" date="2006" name="J. Biol. Chem.">
        <title>A screen for genes of heme uptake identifies the FLC family required for import of FAD into the endoplasmic reticulum.</title>
        <authorList>
            <person name="Protchenko O."/>
            <person name="Rodriguez-Suarez R."/>
            <person name="Androphy R."/>
            <person name="Bussey H."/>
            <person name="Philpott C.C."/>
        </authorList>
    </citation>
    <scope>FUNCTION</scope>
    <scope>SUBCELLULAR LOCATION</scope>
</reference>
<reference key="6">
    <citation type="journal article" date="2006" name="Proc. Natl. Acad. Sci. U.S.A.">
        <title>A global topology map of the Saccharomyces cerevisiae membrane proteome.</title>
        <authorList>
            <person name="Kim H."/>
            <person name="Melen K."/>
            <person name="Oesterberg M."/>
            <person name="von Heijne G."/>
        </authorList>
    </citation>
    <scope>TOPOLOGY [LARGE SCALE ANALYSIS]</scope>
    <source>
        <strain>ATCC 208353 / W303-1A</strain>
    </source>
</reference>
<reference key="7">
    <citation type="journal article" date="2007" name="J. Proteome Res.">
        <title>Large-scale phosphorylation analysis of alpha-factor-arrested Saccharomyces cerevisiae.</title>
        <authorList>
            <person name="Li X."/>
            <person name="Gerber S.A."/>
            <person name="Rudner A.D."/>
            <person name="Beausoleil S.A."/>
            <person name="Haas W."/>
            <person name="Villen J."/>
            <person name="Elias J.E."/>
            <person name="Gygi S.P."/>
        </authorList>
    </citation>
    <scope>IDENTIFICATION BY MASS SPECTROMETRY [LARGE SCALE ANALYSIS]</scope>
    <source>
        <strain>ADR376</strain>
    </source>
</reference>
<reference key="8">
    <citation type="journal article" date="2008" name="Mol. Cell. Proteomics">
        <title>A multidimensional chromatography technology for in-depth phosphoproteome analysis.</title>
        <authorList>
            <person name="Albuquerque C.P."/>
            <person name="Smolka M.B."/>
            <person name="Payne S.H."/>
            <person name="Bafna V."/>
            <person name="Eng J."/>
            <person name="Zhou H."/>
        </authorList>
    </citation>
    <scope>IDENTIFICATION BY MASS SPECTROMETRY [LARGE SCALE ANALYSIS]</scope>
</reference>
<reference key="9">
    <citation type="journal article" date="2009" name="Science">
        <title>Global analysis of Cdk1 substrate phosphorylation sites provides insights into evolution.</title>
        <authorList>
            <person name="Holt L.J."/>
            <person name="Tuch B.B."/>
            <person name="Villen J."/>
            <person name="Johnson A.D."/>
            <person name="Gygi S.P."/>
            <person name="Morgan D.O."/>
        </authorList>
    </citation>
    <scope>IDENTIFICATION BY MASS SPECTROMETRY [LARGE SCALE ANALYSIS]</scope>
</reference>
<sequence length="783" mass="87469">MIFLNTFARCLLTCFVLCSGTARSSDTNDTTPASAKHLQTTSLLTCMDNSQLTASFFDVKFYPDNNTVIFDIDATTTLNGNVTVKAELLTYGLKVLDKTFDLCSLGQVSLCPLSAGRIDVMSTQVIESSITKQFPGIAYTIPDLDAQVRVVAYAQNDTEFETPLACVQAILSNGKTVQTKYAAWPIAAISGVGVLTSGFVSVIGYSATAAHIASNSISLFIYFQNLAITAMMGVSRVPPIAAAWTQNFQWSMGIINTNFMQKIFDWYVQATNGVSNVVVANKDVLSISVQKRAISMASSSDYNFDTILDDSNLYTTSEKDPSNYSAKILVLRGIERVAYLANIELSNFFLTGIVFFLFFLFVVVVSLIFFKALLEVLTRARILKETSNFFQYRKNWGSIIKGTLFRLSIIAFPQVSLLAIWEFTQVNSPAIVVDAVVILLIITGLLVYGTIRVFIKGRESLRLYKNPAYLLYSDTYFLNKFGFLYVQFKADKFWWLLPLLSYAFLRSLFVAVLQNQGKAQAMIIFVIELAYFVCLCWIRPYLDKRTNVFNIAIHLVNLINAFFFLFFSNLFKQPAVVSSVMAVILFVLNAVFALFLLLFTIVTCTLALLHRNPDVRYQPMKDDRVSFIPKIQNDFDGKNKNDSELFELRKAVMDTNENEEEKMFRDDTFGKNLNANTNTARLFDDETSSSSFKQNSSPFDASEVTEQPVQPTSAVMGTGGSFLSPQYQRASSASRTNLAPNNTSTSSLMKPESSLYLGNSNKSYSHFNNNGSNENARNNNPYL</sequence>
<proteinExistence type="evidence at protein level"/>
<gene>
    <name type="primary">FLC2</name>
    <name type="ordered locus">YAL053W</name>
</gene>
<protein>
    <recommendedName>
        <fullName>Flavin carrier protein 2</fullName>
    </recommendedName>
    <alternativeName>
        <fullName>FAD transporter 2</fullName>
    </alternativeName>
    <alternativeName>
        <fullName>TRP-like ion channel FLC2</fullName>
    </alternativeName>
</protein>
<evidence type="ECO:0000255" key="1"/>
<evidence type="ECO:0000256" key="2">
    <source>
        <dbReference type="SAM" id="MobiDB-lite"/>
    </source>
</evidence>
<evidence type="ECO:0000269" key="3">
    <source>
    </source>
</evidence>
<evidence type="ECO:0000269" key="4">
    <source>
    </source>
</evidence>
<evidence type="ECO:0000305" key="5"/>
<comment type="function">
    <text evidence="4">May be responsible for the transport of FAD into the endoplasmic reticulum lumen, where it is required for oxidative protein folding.</text>
</comment>
<comment type="subcellular location">
    <subcellularLocation>
        <location evidence="4">Endoplasmic reticulum membrane</location>
        <topology evidence="4">Multi-pass membrane protein</topology>
    </subcellularLocation>
</comment>
<comment type="miscellaneous">
    <text evidence="3">Present with 414 molecules/cell in log phase SD medium.</text>
</comment>
<comment type="similarity">
    <text evidence="5">Belongs to the transient receptor potential (TRP) ion channel family.</text>
</comment>
<organism>
    <name type="scientific">Saccharomyces cerevisiae (strain ATCC 204508 / S288c)</name>
    <name type="common">Baker's yeast</name>
    <dbReference type="NCBI Taxonomy" id="559292"/>
    <lineage>
        <taxon>Eukaryota</taxon>
        <taxon>Fungi</taxon>
        <taxon>Dikarya</taxon>
        <taxon>Ascomycota</taxon>
        <taxon>Saccharomycotina</taxon>
        <taxon>Saccharomycetes</taxon>
        <taxon>Saccharomycetales</taxon>
        <taxon>Saccharomycetaceae</taxon>
        <taxon>Saccharomyces</taxon>
    </lineage>
</organism>
<keyword id="KW-0256">Endoplasmic reticulum</keyword>
<keyword id="KW-0325">Glycoprotein</keyword>
<keyword id="KW-0472">Membrane</keyword>
<keyword id="KW-1185">Reference proteome</keyword>
<keyword id="KW-0732">Signal</keyword>
<keyword id="KW-0812">Transmembrane</keyword>
<keyword id="KW-1133">Transmembrane helix</keyword>
<keyword id="KW-0813">Transport</keyword>
<feature type="signal peptide" evidence="1">
    <location>
        <begin position="1"/>
        <end position="22"/>
    </location>
</feature>
<feature type="chain" id="PRO_0000202424" description="Flavin carrier protein 2">
    <location>
        <begin position="23"/>
        <end position="783"/>
    </location>
</feature>
<feature type="topological domain" description="Lumenal" evidence="1">
    <location>
        <begin position="23"/>
        <end position="182"/>
    </location>
</feature>
<feature type="transmembrane region" description="Helical" evidence="1">
    <location>
        <begin position="183"/>
        <end position="203"/>
    </location>
</feature>
<feature type="topological domain" description="Cytoplasmic" evidence="1">
    <location>
        <begin position="204"/>
        <end position="211"/>
    </location>
</feature>
<feature type="transmembrane region" description="Helical" evidence="1">
    <location>
        <begin position="212"/>
        <end position="232"/>
    </location>
</feature>
<feature type="topological domain" description="Lumenal" evidence="1">
    <location>
        <begin position="233"/>
        <end position="347"/>
    </location>
</feature>
<feature type="transmembrane region" description="Helical" evidence="1">
    <location>
        <begin position="348"/>
        <end position="368"/>
    </location>
</feature>
<feature type="topological domain" description="Cytoplasmic" evidence="1">
    <location>
        <begin position="369"/>
        <end position="402"/>
    </location>
</feature>
<feature type="transmembrane region" description="Helical" evidence="1">
    <location>
        <begin position="403"/>
        <end position="423"/>
    </location>
</feature>
<feature type="topological domain" description="Lumenal" evidence="1">
    <location>
        <begin position="424"/>
        <end position="430"/>
    </location>
</feature>
<feature type="transmembrane region" description="Helical" evidence="1">
    <location>
        <begin position="431"/>
        <end position="451"/>
    </location>
</feature>
<feature type="topological domain" description="Cytoplasmic" evidence="1">
    <location>
        <begin position="452"/>
        <end position="492"/>
    </location>
</feature>
<feature type="transmembrane region" description="Helical" evidence="1">
    <location>
        <begin position="493"/>
        <end position="513"/>
    </location>
</feature>
<feature type="topological domain" description="Lumenal" evidence="1">
    <location>
        <begin position="514"/>
        <end position="521"/>
    </location>
</feature>
<feature type="transmembrane region" description="Helical" evidence="1">
    <location>
        <begin position="522"/>
        <end position="542"/>
    </location>
</feature>
<feature type="topological domain" description="Cytoplasmic" evidence="1">
    <location>
        <begin position="543"/>
        <end position="547"/>
    </location>
</feature>
<feature type="transmembrane region" description="Helical" evidence="1">
    <location>
        <begin position="548"/>
        <end position="568"/>
    </location>
</feature>
<feature type="topological domain" description="Lumenal" evidence="1">
    <location>
        <begin position="569"/>
        <end position="581"/>
    </location>
</feature>
<feature type="transmembrane region" description="Helical" evidence="1">
    <location>
        <begin position="582"/>
        <end position="602"/>
    </location>
</feature>
<feature type="topological domain" description="Cytoplasmic" evidence="1">
    <location>
        <begin position="603"/>
        <end position="783"/>
    </location>
</feature>
<feature type="region of interest" description="Disordered" evidence="2">
    <location>
        <begin position="681"/>
        <end position="783"/>
    </location>
</feature>
<feature type="compositionally biased region" description="Low complexity" evidence="2">
    <location>
        <begin position="688"/>
        <end position="697"/>
    </location>
</feature>
<feature type="compositionally biased region" description="Polar residues" evidence="2">
    <location>
        <begin position="704"/>
        <end position="748"/>
    </location>
</feature>
<feature type="compositionally biased region" description="Polar residues" evidence="2">
    <location>
        <begin position="756"/>
        <end position="767"/>
    </location>
</feature>
<feature type="compositionally biased region" description="Low complexity" evidence="2">
    <location>
        <begin position="768"/>
        <end position="783"/>
    </location>
</feature>
<feature type="glycosylation site" description="N-linked (GlcNAc...) asparagine" evidence="1">
    <location>
        <position position="28"/>
    </location>
</feature>
<feature type="glycosylation site" description="N-linked (GlcNAc...) asparagine" evidence="1">
    <location>
        <position position="65"/>
    </location>
</feature>
<feature type="glycosylation site" description="N-linked (GlcNAc...) asparagine" evidence="1">
    <location>
        <position position="81"/>
    </location>
</feature>
<feature type="glycosylation site" description="N-linked (GlcNAc...) asparagine" evidence="1">
    <location>
        <position position="156"/>
    </location>
</feature>
<feature type="glycosylation site" description="N-linked (GlcNAc...) asparagine" evidence="1">
    <location>
        <position position="323"/>
    </location>
</feature>
<feature type="sequence conflict" description="In Ref. 1; AAC04980." evidence="5" ref="1">
    <original>C</original>
    <variation>S</variation>
    <location>
        <position position="111"/>
    </location>
</feature>
<feature type="sequence conflict" description="In Ref. 1; AAC04980." evidence="5" ref="1">
    <original>N</original>
    <variation>D</variation>
    <location>
        <position position="312"/>
    </location>
</feature>
<feature type="sequence conflict" description="In Ref. 1; AAC04980." evidence="5" ref="1">
    <original>NDS</original>
    <variation>IDP</variation>
    <location>
        <begin position="641"/>
        <end position="643"/>
    </location>
</feature>
<dbReference type="EMBL" id="U12980">
    <property type="protein sequence ID" value="AAC04980.1"/>
    <property type="molecule type" value="Genomic_DNA"/>
</dbReference>
<dbReference type="EMBL" id="X76891">
    <property type="protein sequence ID" value="CAA54219.1"/>
    <property type="molecule type" value="Genomic_DNA"/>
</dbReference>
<dbReference type="EMBL" id="BK006935">
    <property type="protein sequence ID" value="DAA06935.2"/>
    <property type="molecule type" value="Genomic_DNA"/>
</dbReference>
<dbReference type="PIR" id="S51968">
    <property type="entry name" value="S51968"/>
</dbReference>
<dbReference type="RefSeq" id="NP_009348.2">
    <property type="nucleotide sequence ID" value="NM_001178196.2"/>
</dbReference>
<dbReference type="BioGRID" id="31776">
    <property type="interactions" value="147"/>
</dbReference>
<dbReference type="DIP" id="DIP-6708N"/>
<dbReference type="FunCoup" id="P39719">
    <property type="interactions" value="87"/>
</dbReference>
<dbReference type="IntAct" id="P39719">
    <property type="interactions" value="33"/>
</dbReference>
<dbReference type="MINT" id="P39719"/>
<dbReference type="STRING" id="4932.YAL053W"/>
<dbReference type="TCDB" id="1.A.131.1.3">
    <property type="family name" value="the putative trp-like channel (p-trpl-ch) family"/>
</dbReference>
<dbReference type="GlyCosmos" id="P39719">
    <property type="glycosylation" value="5 sites, No reported glycans"/>
</dbReference>
<dbReference type="GlyGen" id="P39719">
    <property type="glycosylation" value="6 sites"/>
</dbReference>
<dbReference type="iPTMnet" id="P39719"/>
<dbReference type="PaxDb" id="4932-YAL053W"/>
<dbReference type="PeptideAtlas" id="P39719"/>
<dbReference type="EnsemblFungi" id="YAL053W_mRNA">
    <property type="protein sequence ID" value="YAL053W"/>
    <property type="gene ID" value="YAL053W"/>
</dbReference>
<dbReference type="GeneID" id="851246"/>
<dbReference type="KEGG" id="sce:YAL053W"/>
<dbReference type="AGR" id="SGD:S000000049"/>
<dbReference type="SGD" id="S000000049">
    <property type="gene designation" value="FLC2"/>
</dbReference>
<dbReference type="VEuPathDB" id="FungiDB:YAL053W"/>
<dbReference type="eggNOG" id="ENOG502QSVZ">
    <property type="taxonomic scope" value="Eukaryota"/>
</dbReference>
<dbReference type="GeneTree" id="ENSGT00940000176312"/>
<dbReference type="HOGENOM" id="CLU_010226_0_1_1"/>
<dbReference type="InParanoid" id="P39719"/>
<dbReference type="OMA" id="FQAQAFI"/>
<dbReference type="OrthoDB" id="5212126at2759"/>
<dbReference type="BioCyc" id="YEAST:G3O-28858-MONOMER"/>
<dbReference type="BioGRID-ORCS" id="851246">
    <property type="hits" value="6 hits in 10 CRISPR screens"/>
</dbReference>
<dbReference type="PRO" id="PR:P39719"/>
<dbReference type="Proteomes" id="UP000002311">
    <property type="component" value="Chromosome I"/>
</dbReference>
<dbReference type="RNAct" id="P39719">
    <property type="molecule type" value="protein"/>
</dbReference>
<dbReference type="GO" id="GO:0005737">
    <property type="term" value="C:cytoplasm"/>
    <property type="evidence" value="ECO:0007005"/>
    <property type="project" value="SGD"/>
</dbReference>
<dbReference type="GO" id="GO:0005783">
    <property type="term" value="C:endoplasmic reticulum"/>
    <property type="evidence" value="ECO:0000314"/>
    <property type="project" value="SGD"/>
</dbReference>
<dbReference type="GO" id="GO:0005789">
    <property type="term" value="C:endoplasmic reticulum membrane"/>
    <property type="evidence" value="ECO:0007669"/>
    <property type="project" value="UniProtKB-SubCell"/>
</dbReference>
<dbReference type="GO" id="GO:0016020">
    <property type="term" value="C:membrane"/>
    <property type="evidence" value="ECO:0000318"/>
    <property type="project" value="GO_Central"/>
</dbReference>
<dbReference type="GO" id="GO:0015230">
    <property type="term" value="F:FAD transmembrane transporter activity"/>
    <property type="evidence" value="ECO:0000315"/>
    <property type="project" value="SGD"/>
</dbReference>
<dbReference type="GO" id="GO:0055074">
    <property type="term" value="P:calcium ion homeostasis"/>
    <property type="evidence" value="ECO:0000315"/>
    <property type="project" value="SGD"/>
</dbReference>
<dbReference type="GO" id="GO:0071476">
    <property type="term" value="P:cellular hypotonic response"/>
    <property type="evidence" value="ECO:0000315"/>
    <property type="project" value="SGD"/>
</dbReference>
<dbReference type="GO" id="GO:0015883">
    <property type="term" value="P:FAD transport"/>
    <property type="evidence" value="ECO:0000315"/>
    <property type="project" value="SGD"/>
</dbReference>
<dbReference type="GO" id="GO:0009272">
    <property type="term" value="P:fungal-type cell wall biogenesis"/>
    <property type="evidence" value="ECO:0000315"/>
    <property type="project" value="SGD"/>
</dbReference>
<dbReference type="GO" id="GO:0006457">
    <property type="term" value="P:protein folding"/>
    <property type="evidence" value="ECO:0000315"/>
    <property type="project" value="SGD"/>
</dbReference>
<dbReference type="GO" id="GO:0030148">
    <property type="term" value="P:sphingolipid biosynthetic process"/>
    <property type="evidence" value="ECO:0000316"/>
    <property type="project" value="SGD"/>
</dbReference>
<dbReference type="GO" id="GO:0055085">
    <property type="term" value="P:transmembrane transport"/>
    <property type="evidence" value="ECO:0000315"/>
    <property type="project" value="SGD"/>
</dbReference>
<dbReference type="InterPro" id="IPR010308">
    <property type="entry name" value="TRP_C"/>
</dbReference>
<dbReference type="InterPro" id="IPR040241">
    <property type="entry name" value="TRP_Flc/Pkd2-like"/>
</dbReference>
<dbReference type="InterPro" id="IPR032800">
    <property type="entry name" value="TRP_N"/>
</dbReference>
<dbReference type="PANTHER" id="PTHR31145:SF2">
    <property type="entry name" value="FLAVIN CARRIER PROTEIN 2"/>
    <property type="match status" value="1"/>
</dbReference>
<dbReference type="PANTHER" id="PTHR31145">
    <property type="entry name" value="INTEGRAL MEMBRANE PROTEIN (AFU_ORTHOLOGUE AFUA_7G01610)"/>
    <property type="match status" value="1"/>
</dbReference>
<dbReference type="Pfam" id="PF06011">
    <property type="entry name" value="TRP"/>
    <property type="match status" value="1"/>
</dbReference>
<dbReference type="Pfam" id="PF14558">
    <property type="entry name" value="TRP_N"/>
    <property type="match status" value="1"/>
</dbReference>
<dbReference type="SMART" id="SM01320">
    <property type="entry name" value="TRP_N"/>
    <property type="match status" value="1"/>
</dbReference>
<accession>P39719</accession>
<accession>D6VPG5</accession>
<accession>Q05165</accession>